<dbReference type="EMBL" id="CP000267">
    <property type="protein sequence ID" value="ABD67803.1"/>
    <property type="molecule type" value="Genomic_DNA"/>
</dbReference>
<dbReference type="RefSeq" id="WP_011462376.1">
    <property type="nucleotide sequence ID" value="NC_007908.1"/>
</dbReference>
<dbReference type="SMR" id="Q223K4"/>
<dbReference type="STRING" id="338969.Rfer_0041"/>
<dbReference type="KEGG" id="rfr:Rfer_0041"/>
<dbReference type="eggNOG" id="COG2332">
    <property type="taxonomic scope" value="Bacteria"/>
</dbReference>
<dbReference type="HOGENOM" id="CLU_079503_1_1_4"/>
<dbReference type="OrthoDB" id="9793584at2"/>
<dbReference type="Proteomes" id="UP000008332">
    <property type="component" value="Chromosome"/>
</dbReference>
<dbReference type="GO" id="GO:0005886">
    <property type="term" value="C:plasma membrane"/>
    <property type="evidence" value="ECO:0007669"/>
    <property type="project" value="UniProtKB-SubCell"/>
</dbReference>
<dbReference type="GO" id="GO:0020037">
    <property type="term" value="F:heme binding"/>
    <property type="evidence" value="ECO:0007669"/>
    <property type="project" value="InterPro"/>
</dbReference>
<dbReference type="GO" id="GO:0046872">
    <property type="term" value="F:metal ion binding"/>
    <property type="evidence" value="ECO:0007669"/>
    <property type="project" value="UniProtKB-KW"/>
</dbReference>
<dbReference type="GO" id="GO:0017004">
    <property type="term" value="P:cytochrome complex assembly"/>
    <property type="evidence" value="ECO:0007669"/>
    <property type="project" value="UniProtKB-KW"/>
</dbReference>
<dbReference type="FunFam" id="2.40.50.140:FF:000104">
    <property type="entry name" value="Cytochrome c-type biogenesis protein CcmE"/>
    <property type="match status" value="1"/>
</dbReference>
<dbReference type="Gene3D" id="2.40.50.140">
    <property type="entry name" value="Nucleic acid-binding proteins"/>
    <property type="match status" value="1"/>
</dbReference>
<dbReference type="HAMAP" id="MF_01959">
    <property type="entry name" value="CcmE"/>
    <property type="match status" value="1"/>
</dbReference>
<dbReference type="InterPro" id="IPR004329">
    <property type="entry name" value="CcmE"/>
</dbReference>
<dbReference type="InterPro" id="IPR036127">
    <property type="entry name" value="CcmE-like_sf"/>
</dbReference>
<dbReference type="InterPro" id="IPR012340">
    <property type="entry name" value="NA-bd_OB-fold"/>
</dbReference>
<dbReference type="NCBIfam" id="NF009727">
    <property type="entry name" value="PRK13254.1-1"/>
    <property type="match status" value="1"/>
</dbReference>
<dbReference type="NCBIfam" id="NF009729">
    <property type="entry name" value="PRK13254.1-3"/>
    <property type="match status" value="1"/>
</dbReference>
<dbReference type="NCBIfam" id="NF009731">
    <property type="entry name" value="PRK13254.1-5"/>
    <property type="match status" value="1"/>
</dbReference>
<dbReference type="PANTHER" id="PTHR34128">
    <property type="entry name" value="CYTOCHROME C-TYPE BIOGENESIS PROTEIN CCME HOMOLOG, MITOCHONDRIAL"/>
    <property type="match status" value="1"/>
</dbReference>
<dbReference type="PANTHER" id="PTHR34128:SF2">
    <property type="entry name" value="CYTOCHROME C-TYPE BIOGENESIS PROTEIN CCME HOMOLOG, MITOCHONDRIAL"/>
    <property type="match status" value="1"/>
</dbReference>
<dbReference type="Pfam" id="PF03100">
    <property type="entry name" value="CcmE"/>
    <property type="match status" value="1"/>
</dbReference>
<dbReference type="SUPFAM" id="SSF82093">
    <property type="entry name" value="Heme chaperone CcmE"/>
    <property type="match status" value="1"/>
</dbReference>
<protein>
    <recommendedName>
        <fullName evidence="1">Cytochrome c-type biogenesis protein CcmE</fullName>
    </recommendedName>
    <alternativeName>
        <fullName evidence="1">Cytochrome c maturation protein E</fullName>
    </alternativeName>
    <alternativeName>
        <fullName evidence="1">Heme chaperone CcmE</fullName>
    </alternativeName>
</protein>
<proteinExistence type="inferred from homology"/>
<name>CCME_ALBFT</name>
<keyword id="KW-0997">Cell inner membrane</keyword>
<keyword id="KW-1003">Cell membrane</keyword>
<keyword id="KW-0201">Cytochrome c-type biogenesis</keyword>
<keyword id="KW-0349">Heme</keyword>
<keyword id="KW-0408">Iron</keyword>
<keyword id="KW-0472">Membrane</keyword>
<keyword id="KW-0479">Metal-binding</keyword>
<keyword id="KW-1185">Reference proteome</keyword>
<keyword id="KW-0735">Signal-anchor</keyword>
<keyword id="KW-0812">Transmembrane</keyword>
<keyword id="KW-1133">Transmembrane helix</keyword>
<evidence type="ECO:0000255" key="1">
    <source>
        <dbReference type="HAMAP-Rule" id="MF_01959"/>
    </source>
</evidence>
<sequence length="147" mass="15854">MKPRHKRAAIIAGGLAALGIAAYLVLNAFQSNLVFFFSPTQVFAGEAPKNRAFRIGGLVKEGTVKRDNLTVAFVVTDTAKEVPVSYTGILPDLFKEGKGVVAQGKLDENGHFTATEVLAKHDENYMPPEAKAALDQAQIQKTIKSLK</sequence>
<gene>
    <name evidence="1" type="primary">ccmE</name>
    <name evidence="1" type="synonym">cycJ</name>
    <name type="ordered locus">Rfer_0041</name>
</gene>
<accession>Q223K4</accession>
<feature type="chain" id="PRO_1000070838" description="Cytochrome c-type biogenesis protein CcmE">
    <location>
        <begin position="1"/>
        <end position="147"/>
    </location>
</feature>
<feature type="topological domain" description="Cytoplasmic" evidence="1">
    <location>
        <begin position="1"/>
        <end position="7"/>
    </location>
</feature>
<feature type="transmembrane region" description="Helical; Signal-anchor for type II membrane protein" evidence="1">
    <location>
        <begin position="8"/>
        <end position="28"/>
    </location>
</feature>
<feature type="topological domain" description="Periplasmic" evidence="1">
    <location>
        <begin position="29"/>
        <end position="147"/>
    </location>
</feature>
<feature type="binding site" description="covalent" evidence="1">
    <location>
        <position position="121"/>
    </location>
    <ligand>
        <name>heme</name>
        <dbReference type="ChEBI" id="CHEBI:30413"/>
    </ligand>
</feature>
<feature type="binding site" description="axial binding residue" evidence="1">
    <location>
        <position position="125"/>
    </location>
    <ligand>
        <name>heme</name>
        <dbReference type="ChEBI" id="CHEBI:30413"/>
    </ligand>
    <ligandPart>
        <name>Fe</name>
        <dbReference type="ChEBI" id="CHEBI:18248"/>
    </ligandPart>
</feature>
<comment type="function">
    <text evidence="1">Heme chaperone required for the biogenesis of c-type cytochromes. Transiently binds heme delivered by CcmC and transfers the heme to apo-cytochromes in a process facilitated by CcmF and CcmH.</text>
</comment>
<comment type="subcellular location">
    <subcellularLocation>
        <location evidence="1">Cell inner membrane</location>
        <topology evidence="1">Single-pass type II membrane protein</topology>
        <orientation evidence="1">Periplasmic side</orientation>
    </subcellularLocation>
</comment>
<comment type="similarity">
    <text evidence="1">Belongs to the CcmE/CycJ family.</text>
</comment>
<reference key="1">
    <citation type="submission" date="2006-02" db="EMBL/GenBank/DDBJ databases">
        <title>Complete sequence of chromosome of Rhodoferax ferrireducens DSM 15236.</title>
        <authorList>
            <person name="Copeland A."/>
            <person name="Lucas S."/>
            <person name="Lapidus A."/>
            <person name="Barry K."/>
            <person name="Detter J.C."/>
            <person name="Glavina del Rio T."/>
            <person name="Hammon N."/>
            <person name="Israni S."/>
            <person name="Pitluck S."/>
            <person name="Brettin T."/>
            <person name="Bruce D."/>
            <person name="Han C."/>
            <person name="Tapia R."/>
            <person name="Gilna P."/>
            <person name="Kiss H."/>
            <person name="Schmutz J."/>
            <person name="Larimer F."/>
            <person name="Land M."/>
            <person name="Kyrpides N."/>
            <person name="Ivanova N."/>
            <person name="Richardson P."/>
        </authorList>
    </citation>
    <scope>NUCLEOTIDE SEQUENCE [LARGE SCALE GENOMIC DNA]</scope>
    <source>
        <strain>ATCC BAA-621 / DSM 15236 / T118</strain>
    </source>
</reference>
<organism>
    <name type="scientific">Albidiferax ferrireducens (strain ATCC BAA-621 / DSM 15236 / T118)</name>
    <name type="common">Rhodoferax ferrireducens</name>
    <dbReference type="NCBI Taxonomy" id="338969"/>
    <lineage>
        <taxon>Bacteria</taxon>
        <taxon>Pseudomonadati</taxon>
        <taxon>Pseudomonadota</taxon>
        <taxon>Betaproteobacteria</taxon>
        <taxon>Burkholderiales</taxon>
        <taxon>Comamonadaceae</taxon>
        <taxon>Rhodoferax</taxon>
    </lineage>
</organism>